<proteinExistence type="inferred from homology"/>
<evidence type="ECO:0000255" key="1">
    <source>
        <dbReference type="HAMAP-Rule" id="MF_01264"/>
    </source>
</evidence>
<feature type="chain" id="PRO_0000139071" description="CCA-adding enzyme">
    <location>
        <begin position="1"/>
        <end position="454"/>
    </location>
</feature>
<feature type="binding site" evidence="1">
    <location>
        <position position="59"/>
    </location>
    <ligand>
        <name>ATP</name>
        <dbReference type="ChEBI" id="CHEBI:30616"/>
    </ligand>
</feature>
<feature type="binding site" evidence="1">
    <location>
        <position position="59"/>
    </location>
    <ligand>
        <name>CTP</name>
        <dbReference type="ChEBI" id="CHEBI:37563"/>
    </ligand>
</feature>
<feature type="binding site" evidence="1">
    <location>
        <position position="62"/>
    </location>
    <ligand>
        <name>ATP</name>
        <dbReference type="ChEBI" id="CHEBI:30616"/>
    </ligand>
</feature>
<feature type="binding site" evidence="1">
    <location>
        <position position="62"/>
    </location>
    <ligand>
        <name>CTP</name>
        <dbReference type="ChEBI" id="CHEBI:37563"/>
    </ligand>
</feature>
<feature type="binding site" evidence="1">
    <location>
        <position position="71"/>
    </location>
    <ligand>
        <name>Mg(2+)</name>
        <dbReference type="ChEBI" id="CHEBI:18420"/>
    </ligand>
</feature>
<feature type="binding site" evidence="1">
    <location>
        <position position="73"/>
    </location>
    <ligand>
        <name>Mg(2+)</name>
        <dbReference type="ChEBI" id="CHEBI:18420"/>
    </ligand>
</feature>
<feature type="binding site" evidence="1">
    <location>
        <position position="125"/>
    </location>
    <ligand>
        <name>Mg(2+)</name>
        <dbReference type="ChEBI" id="CHEBI:18420"/>
    </ligand>
</feature>
<feature type="binding site" evidence="1">
    <location>
        <position position="148"/>
    </location>
    <ligand>
        <name>ATP</name>
        <dbReference type="ChEBI" id="CHEBI:30616"/>
    </ligand>
</feature>
<feature type="binding site" evidence="1">
    <location>
        <position position="148"/>
    </location>
    <ligand>
        <name>CTP</name>
        <dbReference type="ChEBI" id="CHEBI:37563"/>
    </ligand>
</feature>
<feature type="binding site" evidence="1">
    <location>
        <position position="167"/>
    </location>
    <ligand>
        <name>ATP</name>
        <dbReference type="ChEBI" id="CHEBI:30616"/>
    </ligand>
</feature>
<feature type="binding site" evidence="1">
    <location>
        <position position="167"/>
    </location>
    <ligand>
        <name>CTP</name>
        <dbReference type="ChEBI" id="CHEBI:37563"/>
    </ligand>
</feature>
<feature type="binding site" evidence="1">
    <location>
        <position position="176"/>
    </location>
    <ligand>
        <name>ATP</name>
        <dbReference type="ChEBI" id="CHEBI:30616"/>
    </ligand>
</feature>
<feature type="binding site" evidence="1">
    <location>
        <position position="176"/>
    </location>
    <ligand>
        <name>CTP</name>
        <dbReference type="ChEBI" id="CHEBI:37563"/>
    </ligand>
</feature>
<protein>
    <recommendedName>
        <fullName evidence="1">CCA-adding enzyme</fullName>
        <ecNumber evidence="1">2.7.7.72</ecNumber>
    </recommendedName>
    <alternativeName>
        <fullName evidence="1">CCA tRNA nucleotidyltransferase</fullName>
    </alternativeName>
    <alternativeName>
        <fullName evidence="1">tRNA CCA-pyrophosphorylase</fullName>
    </alternativeName>
    <alternativeName>
        <fullName evidence="1">tRNA adenylyl-/cytidylyl- transferase</fullName>
    </alternativeName>
    <alternativeName>
        <fullName evidence="1">tRNA nucleotidyltransferase</fullName>
    </alternativeName>
    <alternativeName>
        <fullName evidence="1">tRNA-NT</fullName>
    </alternativeName>
</protein>
<sequence length="454" mass="51767">MDTDTSISEDLKLAVLEKIKPTEAERKELMAVQDELAAEVKAAAEKLCVSDIFVKMVGSAARGTWLSGTHDIDVFISFPEETSRKDLEIRGMGIAREVAKHAEYAEDRHAEHPYLNIVYKGFDVDLVPCFRVCSACQLKSAVDRTPFHNEFIKSRIKGREDDVLLMKQFMRGGRVYGSELKTQGFSGYLTELLIIYYGSFEKTVKAASSWKPGKKIDIMQHSELEHSEPLVMVDPTDPKRNVAAALSLDKFCMFIDHCREFLKSPEIKFFFPESPLPIEDKEFLEKLESRKTSQLAIVFETPDVVDDVLYPQLYKMEQAASSLLSEYDFSVIKTGVWSGKPQTVVMLELISGTLPNVKKRTGPPVWVREHAEKFKDKYEGAENVFGGYIENGKYVYEVHRKYTTAKGLLEEQLLNCSLGKQVYQSVNKGFEVIENAEICRLKDQDFRVFLRKWV</sequence>
<name>CCA_METMA</name>
<organism>
    <name type="scientific">Methanosarcina mazei (strain ATCC BAA-159 / DSM 3647 / Goe1 / Go1 / JCM 11833 / OCM 88)</name>
    <name type="common">Methanosarcina frisia</name>
    <dbReference type="NCBI Taxonomy" id="192952"/>
    <lineage>
        <taxon>Archaea</taxon>
        <taxon>Methanobacteriati</taxon>
        <taxon>Methanobacteriota</taxon>
        <taxon>Stenosarchaea group</taxon>
        <taxon>Methanomicrobia</taxon>
        <taxon>Methanosarcinales</taxon>
        <taxon>Methanosarcinaceae</taxon>
        <taxon>Methanosarcina</taxon>
    </lineage>
</organism>
<dbReference type="EC" id="2.7.7.72" evidence="1"/>
<dbReference type="EMBL" id="AE008384">
    <property type="protein sequence ID" value="AAM30165.1"/>
    <property type="molecule type" value="Genomic_DNA"/>
</dbReference>
<dbReference type="RefSeq" id="WP_011032422.1">
    <property type="nucleotide sequence ID" value="NC_003901.1"/>
</dbReference>
<dbReference type="SMR" id="Q8PZM3"/>
<dbReference type="GeneID" id="1478811"/>
<dbReference type="GeneID" id="82159479"/>
<dbReference type="KEGG" id="mma:MM_0469"/>
<dbReference type="PATRIC" id="fig|192952.21.peg.565"/>
<dbReference type="eggNOG" id="arCOG04249">
    <property type="taxonomic scope" value="Archaea"/>
</dbReference>
<dbReference type="HOGENOM" id="CLU_044679_1_0_2"/>
<dbReference type="Proteomes" id="UP000000595">
    <property type="component" value="Chromosome"/>
</dbReference>
<dbReference type="GO" id="GO:0005524">
    <property type="term" value="F:ATP binding"/>
    <property type="evidence" value="ECO:0007669"/>
    <property type="project" value="UniProtKB-UniRule"/>
</dbReference>
<dbReference type="GO" id="GO:0004810">
    <property type="term" value="F:CCA tRNA nucleotidyltransferase activity"/>
    <property type="evidence" value="ECO:0007669"/>
    <property type="project" value="UniProtKB-UniRule"/>
</dbReference>
<dbReference type="GO" id="GO:0000287">
    <property type="term" value="F:magnesium ion binding"/>
    <property type="evidence" value="ECO:0007669"/>
    <property type="project" value="UniProtKB-UniRule"/>
</dbReference>
<dbReference type="GO" id="GO:0000049">
    <property type="term" value="F:tRNA binding"/>
    <property type="evidence" value="ECO:0007669"/>
    <property type="project" value="UniProtKB-UniRule"/>
</dbReference>
<dbReference type="GO" id="GO:0042245">
    <property type="term" value="P:RNA repair"/>
    <property type="evidence" value="ECO:0007669"/>
    <property type="project" value="UniProtKB-KW"/>
</dbReference>
<dbReference type="GO" id="GO:0001680">
    <property type="term" value="P:tRNA 3'-terminal CCA addition"/>
    <property type="evidence" value="ECO:0007669"/>
    <property type="project" value="UniProtKB-UniRule"/>
</dbReference>
<dbReference type="CDD" id="cd05400">
    <property type="entry name" value="NT_2-5OAS_ClassI-CCAase"/>
    <property type="match status" value="1"/>
</dbReference>
<dbReference type="Gene3D" id="3.30.70.1550">
    <property type="entry name" value="Archaeal tRNA CCA-adding enzyme catalytic domain"/>
    <property type="match status" value="1"/>
</dbReference>
<dbReference type="Gene3D" id="3.30.460.10">
    <property type="entry name" value="Beta Polymerase, domain 2"/>
    <property type="match status" value="1"/>
</dbReference>
<dbReference type="Gene3D" id="1.10.1410.30">
    <property type="entry name" value="CCA tRNA nucleotidyltransferase, domain 2"/>
    <property type="match status" value="1"/>
</dbReference>
<dbReference type="Gene3D" id="3.30.70.590">
    <property type="entry name" value="Poly(A) polymerase predicted RNA binding domain"/>
    <property type="match status" value="1"/>
</dbReference>
<dbReference type="HAMAP" id="MF_01264">
    <property type="entry name" value="CCA_arch"/>
    <property type="match status" value="1"/>
</dbReference>
<dbReference type="InterPro" id="IPR048833">
    <property type="entry name" value="CAA_C"/>
</dbReference>
<dbReference type="InterPro" id="IPR008229">
    <property type="entry name" value="CCA-adding_arc"/>
</dbReference>
<dbReference type="InterPro" id="IPR042090">
    <property type="entry name" value="CCA_tRNA_nucleotrans_2"/>
</dbReference>
<dbReference type="InterPro" id="IPR006116">
    <property type="entry name" value="NT_2-5OAS_ClassI-CCAase"/>
</dbReference>
<dbReference type="InterPro" id="IPR043519">
    <property type="entry name" value="NT_sf"/>
</dbReference>
<dbReference type="InterPro" id="IPR011068">
    <property type="entry name" value="NuclTrfase_I-like_C"/>
</dbReference>
<dbReference type="InterPro" id="IPR002934">
    <property type="entry name" value="Polymerase_NTP_transf_dom"/>
</dbReference>
<dbReference type="InterPro" id="IPR015329">
    <property type="entry name" value="tRNA_NucTransf2"/>
</dbReference>
<dbReference type="NCBIfam" id="TIGR03671">
    <property type="entry name" value="cca_archaeal"/>
    <property type="match status" value="1"/>
</dbReference>
<dbReference type="PANTHER" id="PTHR39643">
    <property type="entry name" value="CCA-ADDING ENZYME"/>
    <property type="match status" value="1"/>
</dbReference>
<dbReference type="PANTHER" id="PTHR39643:SF1">
    <property type="entry name" value="CCA-ADDING ENZYME"/>
    <property type="match status" value="1"/>
</dbReference>
<dbReference type="Pfam" id="PF21133">
    <property type="entry name" value="CAA_C"/>
    <property type="match status" value="1"/>
</dbReference>
<dbReference type="Pfam" id="PF01909">
    <property type="entry name" value="NTP_transf_2"/>
    <property type="match status" value="1"/>
</dbReference>
<dbReference type="Pfam" id="PF09249">
    <property type="entry name" value="tRNA_NucTransf2"/>
    <property type="match status" value="1"/>
</dbReference>
<dbReference type="PIRSF" id="PIRSF005335">
    <property type="entry name" value="CCA_arch"/>
    <property type="match status" value="1"/>
</dbReference>
<dbReference type="SUPFAM" id="SSF81301">
    <property type="entry name" value="Nucleotidyltransferase"/>
    <property type="match status" value="1"/>
</dbReference>
<dbReference type="SUPFAM" id="SSF55003">
    <property type="entry name" value="PAP/Archaeal CCA-adding enzyme, C-terminal domain"/>
    <property type="match status" value="1"/>
</dbReference>
<dbReference type="SUPFAM" id="SSF81631">
    <property type="entry name" value="PAP/OAS1 substrate-binding domain"/>
    <property type="match status" value="1"/>
</dbReference>
<comment type="function">
    <text evidence="1">Catalyzes the addition and repair of the essential 3'-terminal CCA sequence in tRNAs without using a nucleic acid template. Adds these three nucleotides in the order of C, C, and A to the tRNA nucleotide-73, using CTP and ATP as substrates and producing inorganic pyrophosphate. tRNA 3'-terminal CCA addition is required both for tRNA processing and repair. Also involved in tRNA surveillance by mediating tandem CCA addition to generate a CCACCA at the 3' terminus of unstable tRNAs. While stable tRNAs receive only 3'-terminal CCA, unstable tRNAs are marked with CCACCA and rapidly degraded.</text>
</comment>
<comment type="catalytic activity">
    <reaction evidence="1">
        <text>a tRNA precursor + 2 CTP + ATP = a tRNA with a 3' CCA end + 3 diphosphate</text>
        <dbReference type="Rhea" id="RHEA:14433"/>
        <dbReference type="Rhea" id="RHEA-COMP:10465"/>
        <dbReference type="Rhea" id="RHEA-COMP:10468"/>
        <dbReference type="ChEBI" id="CHEBI:30616"/>
        <dbReference type="ChEBI" id="CHEBI:33019"/>
        <dbReference type="ChEBI" id="CHEBI:37563"/>
        <dbReference type="ChEBI" id="CHEBI:74896"/>
        <dbReference type="ChEBI" id="CHEBI:83071"/>
        <dbReference type="EC" id="2.7.7.72"/>
    </reaction>
</comment>
<comment type="catalytic activity">
    <reaction evidence="1">
        <text>a tRNA with a 3' CCA end + 2 CTP + ATP = a tRNA with a 3' CCACCA end + 3 diphosphate</text>
        <dbReference type="Rhea" id="RHEA:76235"/>
        <dbReference type="Rhea" id="RHEA-COMP:10468"/>
        <dbReference type="Rhea" id="RHEA-COMP:18655"/>
        <dbReference type="ChEBI" id="CHEBI:30616"/>
        <dbReference type="ChEBI" id="CHEBI:33019"/>
        <dbReference type="ChEBI" id="CHEBI:37563"/>
        <dbReference type="ChEBI" id="CHEBI:83071"/>
        <dbReference type="ChEBI" id="CHEBI:195187"/>
    </reaction>
    <physiologicalReaction direction="left-to-right" evidence="1">
        <dbReference type="Rhea" id="RHEA:76236"/>
    </physiologicalReaction>
</comment>
<comment type="cofactor">
    <cofactor evidence="1">
        <name>Mg(2+)</name>
        <dbReference type="ChEBI" id="CHEBI:18420"/>
    </cofactor>
</comment>
<comment type="subunit">
    <text evidence="1">Homodimer.</text>
</comment>
<comment type="miscellaneous">
    <text evidence="1">A single active site specifically recognizes both ATP and CTP and is responsible for their addition.</text>
</comment>
<comment type="similarity">
    <text evidence="1">Belongs to the tRNA nucleotidyltransferase/poly(A) polymerase family. Archaeal CCA-adding enzyme subfamily.</text>
</comment>
<gene>
    <name evidence="1" type="primary">cca</name>
    <name type="ordered locus">MM_0469</name>
</gene>
<keyword id="KW-0067">ATP-binding</keyword>
<keyword id="KW-0460">Magnesium</keyword>
<keyword id="KW-0479">Metal-binding</keyword>
<keyword id="KW-0547">Nucleotide-binding</keyword>
<keyword id="KW-0548">Nucleotidyltransferase</keyword>
<keyword id="KW-0692">RNA repair</keyword>
<keyword id="KW-0694">RNA-binding</keyword>
<keyword id="KW-0808">Transferase</keyword>
<keyword id="KW-0819">tRNA processing</keyword>
<accession>Q8PZM3</accession>
<reference key="1">
    <citation type="journal article" date="2002" name="J. Mol. Microbiol. Biotechnol.">
        <title>The genome of Methanosarcina mazei: evidence for lateral gene transfer between Bacteria and Archaea.</title>
        <authorList>
            <person name="Deppenmeier U."/>
            <person name="Johann A."/>
            <person name="Hartsch T."/>
            <person name="Merkl R."/>
            <person name="Schmitz R.A."/>
            <person name="Martinez-Arias R."/>
            <person name="Henne A."/>
            <person name="Wiezer A."/>
            <person name="Baeumer S."/>
            <person name="Jacobi C."/>
            <person name="Brueggemann H."/>
            <person name="Lienard T."/>
            <person name="Christmann A."/>
            <person name="Boemecke M."/>
            <person name="Steckel S."/>
            <person name="Bhattacharyya A."/>
            <person name="Lykidis A."/>
            <person name="Overbeek R."/>
            <person name="Klenk H.-P."/>
            <person name="Gunsalus R.P."/>
            <person name="Fritz H.-J."/>
            <person name="Gottschalk G."/>
        </authorList>
    </citation>
    <scope>NUCLEOTIDE SEQUENCE [LARGE SCALE GENOMIC DNA]</scope>
    <source>
        <strain>ATCC BAA-159 / DSM 3647 / Goe1 / Go1 / JCM 11833 / OCM 88</strain>
    </source>
</reference>